<name>ACTC_BIOTE</name>
<proteinExistence type="inferred from homology"/>
<organism>
    <name type="scientific">Biomphalaria tenagophila</name>
    <name type="common">Bloodfluke planorb</name>
    <name type="synonym">Freshwater snail</name>
    <dbReference type="NCBI Taxonomy" id="112528"/>
    <lineage>
        <taxon>Eukaryota</taxon>
        <taxon>Metazoa</taxon>
        <taxon>Spiralia</taxon>
        <taxon>Lophotrochozoa</taxon>
        <taxon>Mollusca</taxon>
        <taxon>Gastropoda</taxon>
        <taxon>Heterobranchia</taxon>
        <taxon>Euthyneura</taxon>
        <taxon>Panpulmonata</taxon>
        <taxon>Hygrophila</taxon>
        <taxon>Lymnaeoidea</taxon>
        <taxon>Planorbidae</taxon>
        <taxon>Biomphalaria</taxon>
    </lineage>
</organism>
<sequence length="376" mass="41893">MCDEDVAALVVDNGSGMCKAGFAGDDAPRAVFPSIVGRPRHQGVMVGMGQKDSYVGDEAQSKRGILTLKYPIEHGIVTNWDDMEKIWHHTFYNELRVAPEEHPVLLTEAPLNPKANREKMTQIMFETFNTPAMYVAIQAVLSLYASGRTTGIVLDSGDGVTHTVPIYEGYALPHAIMRLDLAGRDLTDYLMKILTERGYSFTTTAEREIVRDIKEKLCYVALDFEQEMQTASTSSSLEKSYELPDGQVITIGNERFRCPEAMFQPSFLGMEAAGIHETTYNSIMKCDVDIRKDLYANTVLSGGSTMFPGIADRMQKEITALAPPTMKIKIIAPPERKYSVWIGGSILASLSTFQQMWISKQEYDESGPSIVHRKCF</sequence>
<reference key="1">
    <citation type="journal article" date="2002" name="J. Molluscan Stud.">
        <title>Comparative study of cytoplasmic actin DNA from six species of Planorbidae (Gastropoda: Basommatophora).</title>
        <authorList>
            <person name="Adema C.M."/>
        </authorList>
    </citation>
    <scope>NUCLEOTIDE SEQUENCE [GENOMIC DNA]</scope>
</reference>
<accession>Q964E0</accession>
<feature type="initiator methionine" description="Removed">
    <location>
        <position position="1"/>
    </location>
</feature>
<feature type="chain" id="PRO_0000443009" description="Actin, cytoplasmic, intermediate form" evidence="1">
    <location>
        <begin position="2"/>
        <end position="376"/>
    </location>
</feature>
<feature type="chain" id="PRO_0000000631" description="Actin, cytoplasmic" evidence="5">
    <location>
        <begin position="3"/>
        <end position="376"/>
    </location>
</feature>
<feature type="modified residue" description="N-acetylcysteine; in intermediate form" evidence="1">
    <location>
        <position position="2"/>
    </location>
</feature>
<feature type="modified residue" description="N-acetylaspartate; in Actin, cytoplasmic" evidence="5">
    <location>
        <position position="3"/>
    </location>
</feature>
<feature type="modified residue" description="Methionine (R)-sulfoxide" evidence="4">
    <location>
        <position position="45"/>
    </location>
</feature>
<feature type="modified residue" description="Methionine (R)-sulfoxide" evidence="4">
    <location>
        <position position="48"/>
    </location>
</feature>
<feature type="modified residue" description="Tele-methylhistidine" evidence="2">
    <location>
        <position position="74"/>
    </location>
</feature>
<feature type="modified residue" description="N6-methyllysine" evidence="3">
    <location>
        <position position="85"/>
    </location>
</feature>
<protein>
    <recommendedName>
        <fullName>Actin, cytoplasmic</fullName>
        <ecNumber evidence="6">3.6.4.-</ecNumber>
    </recommendedName>
    <component>
        <recommendedName>
            <fullName>Actin, cytoplasmic, intermediate form</fullName>
        </recommendedName>
    </component>
</protein>
<dbReference type="EC" id="3.6.4.-" evidence="6"/>
<dbReference type="EMBL" id="AF329440">
    <property type="protein sequence ID" value="AAK68714.1"/>
    <property type="molecule type" value="Genomic_DNA"/>
</dbReference>
<dbReference type="SMR" id="Q964E0"/>
<dbReference type="GO" id="GO:0005737">
    <property type="term" value="C:cytoplasm"/>
    <property type="evidence" value="ECO:0007669"/>
    <property type="project" value="UniProtKB-KW"/>
</dbReference>
<dbReference type="GO" id="GO:0005856">
    <property type="term" value="C:cytoskeleton"/>
    <property type="evidence" value="ECO:0007669"/>
    <property type="project" value="UniProtKB-SubCell"/>
</dbReference>
<dbReference type="GO" id="GO:0005524">
    <property type="term" value="F:ATP binding"/>
    <property type="evidence" value="ECO:0007669"/>
    <property type="project" value="UniProtKB-KW"/>
</dbReference>
<dbReference type="GO" id="GO:0016787">
    <property type="term" value="F:hydrolase activity"/>
    <property type="evidence" value="ECO:0007669"/>
    <property type="project" value="UniProtKB-KW"/>
</dbReference>
<dbReference type="CDD" id="cd10224">
    <property type="entry name" value="ASKHA_NBD_actin"/>
    <property type="match status" value="1"/>
</dbReference>
<dbReference type="FunFam" id="2.30.36.70:FF:000001">
    <property type="entry name" value="Actin, alpha skeletal muscle"/>
    <property type="match status" value="1"/>
</dbReference>
<dbReference type="FunFam" id="3.30.420.40:FF:000131">
    <property type="entry name" value="Actin, alpha skeletal muscle"/>
    <property type="match status" value="1"/>
</dbReference>
<dbReference type="FunFam" id="3.30.420.40:FF:000291">
    <property type="entry name" value="Actin, alpha skeletal muscle"/>
    <property type="match status" value="1"/>
</dbReference>
<dbReference type="FunFam" id="3.90.640.10:FF:000047">
    <property type="entry name" value="Actin, alpha skeletal muscle"/>
    <property type="match status" value="1"/>
</dbReference>
<dbReference type="FunFam" id="3.30.420.40:FF:000058">
    <property type="entry name" value="Putative actin-related protein 5"/>
    <property type="match status" value="1"/>
</dbReference>
<dbReference type="Gene3D" id="3.30.420.40">
    <property type="match status" value="2"/>
</dbReference>
<dbReference type="Gene3D" id="3.90.640.10">
    <property type="entry name" value="Actin, Chain A, domain 4"/>
    <property type="match status" value="1"/>
</dbReference>
<dbReference type="InterPro" id="IPR004000">
    <property type="entry name" value="Actin"/>
</dbReference>
<dbReference type="InterPro" id="IPR020902">
    <property type="entry name" value="Actin/actin-like_CS"/>
</dbReference>
<dbReference type="InterPro" id="IPR004001">
    <property type="entry name" value="Actin_CS"/>
</dbReference>
<dbReference type="InterPro" id="IPR043129">
    <property type="entry name" value="ATPase_NBD"/>
</dbReference>
<dbReference type="PANTHER" id="PTHR11937">
    <property type="entry name" value="ACTIN"/>
    <property type="match status" value="1"/>
</dbReference>
<dbReference type="Pfam" id="PF00022">
    <property type="entry name" value="Actin"/>
    <property type="match status" value="1"/>
</dbReference>
<dbReference type="PRINTS" id="PR00190">
    <property type="entry name" value="ACTIN"/>
</dbReference>
<dbReference type="SMART" id="SM00268">
    <property type="entry name" value="ACTIN"/>
    <property type="match status" value="1"/>
</dbReference>
<dbReference type="SUPFAM" id="SSF53067">
    <property type="entry name" value="Actin-like ATPase domain"/>
    <property type="match status" value="2"/>
</dbReference>
<dbReference type="PROSITE" id="PS00406">
    <property type="entry name" value="ACTINS_1"/>
    <property type="match status" value="1"/>
</dbReference>
<dbReference type="PROSITE" id="PS00432">
    <property type="entry name" value="ACTINS_2"/>
    <property type="match status" value="1"/>
</dbReference>
<dbReference type="PROSITE" id="PS01132">
    <property type="entry name" value="ACTINS_ACT_LIKE"/>
    <property type="match status" value="1"/>
</dbReference>
<evidence type="ECO:0000250" key="1">
    <source>
        <dbReference type="UniProtKB" id="P62737"/>
    </source>
</evidence>
<evidence type="ECO:0000250" key="2">
    <source>
        <dbReference type="UniProtKB" id="P62739"/>
    </source>
</evidence>
<evidence type="ECO:0000250" key="3">
    <source>
        <dbReference type="UniProtKB" id="P68032"/>
    </source>
</evidence>
<evidence type="ECO:0000250" key="4">
    <source>
        <dbReference type="UniProtKB" id="P68033"/>
    </source>
</evidence>
<evidence type="ECO:0000250" key="5">
    <source>
        <dbReference type="UniProtKB" id="P68135"/>
    </source>
</evidence>
<evidence type="ECO:0000250" key="6">
    <source>
        <dbReference type="UniProtKB" id="P68137"/>
    </source>
</evidence>
<evidence type="ECO:0000305" key="7"/>
<keyword id="KW-0007">Acetylation</keyword>
<keyword id="KW-0067">ATP-binding</keyword>
<keyword id="KW-0963">Cytoplasm</keyword>
<keyword id="KW-0206">Cytoskeleton</keyword>
<keyword id="KW-0378">Hydrolase</keyword>
<keyword id="KW-0488">Methylation</keyword>
<keyword id="KW-0547">Nucleotide-binding</keyword>
<keyword id="KW-0558">Oxidation</keyword>
<comment type="function">
    <text>Actins are highly conserved proteins that are involved in various types of cell motility and are ubiquitously expressed in all eukaryotic cells.</text>
</comment>
<comment type="catalytic activity">
    <reaction evidence="6">
        <text>ATP + H2O = ADP + phosphate + H(+)</text>
        <dbReference type="Rhea" id="RHEA:13065"/>
        <dbReference type="ChEBI" id="CHEBI:15377"/>
        <dbReference type="ChEBI" id="CHEBI:15378"/>
        <dbReference type="ChEBI" id="CHEBI:30616"/>
        <dbReference type="ChEBI" id="CHEBI:43474"/>
        <dbReference type="ChEBI" id="CHEBI:456216"/>
    </reaction>
</comment>
<comment type="subcellular location">
    <subcellularLocation>
        <location>Cytoplasm</location>
        <location>Cytoskeleton</location>
    </subcellularLocation>
</comment>
<comment type="PTM">
    <text evidence="4">Oxidation of Met-45 and Met-48 by MICALs (MICAL1, MICAL2 or MICAL3) to form methionine sulfoxide promotes actin filament depolymerization. MICAL1 and MICAL2 produce the (R)-S-oxide form. The (R)-S-oxide form is reverted by MSRB1 and MSRB2, which promotes actin repolymerization.</text>
</comment>
<comment type="PTM">
    <text evidence="3">Monomethylation at Lys-85 (K85me1) regulates actin-myosin interaction and actomyosin-dependent processes. Demethylation by ALKBH4 is required for maintaining actomyosin dynamics supporting normal cleavage furrow ingression during cytokinesis and cell migration.</text>
</comment>
<comment type="similarity">
    <text evidence="7">Belongs to the actin family.</text>
</comment>